<name>FLOA_STAAC</name>
<comment type="function">
    <text evidence="1">Found in functional membrane microdomains (FMM) that may be equivalent to eukaryotic membrane rafts. FMMs are highly dynamic and increase in number as cells age. Flotillins are thought to be important factors in membrane fluidity.</text>
</comment>
<comment type="subunit">
    <text evidence="1">Homooligomerizes.</text>
</comment>
<comment type="subcellular location">
    <subcellularLocation>
        <location evidence="1">Cell membrane</location>
        <topology evidence="1">Multi-pass membrane protein</topology>
    </subcellularLocation>
    <subcellularLocation>
        <location evidence="1">Membrane raft</location>
        <topology evidence="1">Multi-pass membrane protein</topology>
    </subcellularLocation>
</comment>
<comment type="similarity">
    <text evidence="1">Belongs to the flotillin-like FloA family.</text>
</comment>
<dbReference type="EMBL" id="CP000046">
    <property type="protein sequence ID" value="AAW38246.1"/>
    <property type="molecule type" value="Genomic_DNA"/>
</dbReference>
<dbReference type="RefSeq" id="WP_000492114.1">
    <property type="nucleotide sequence ID" value="NZ_JBGOFO010000003.1"/>
</dbReference>
<dbReference type="SMR" id="Q5HFI7"/>
<dbReference type="GeneID" id="98345944"/>
<dbReference type="KEGG" id="sac:SACOL1630"/>
<dbReference type="HOGENOM" id="CLU_836378_0_0_9"/>
<dbReference type="Proteomes" id="UP000000530">
    <property type="component" value="Chromosome"/>
</dbReference>
<dbReference type="GO" id="GO:0045121">
    <property type="term" value="C:membrane raft"/>
    <property type="evidence" value="ECO:0007669"/>
    <property type="project" value="UniProtKB-SubCell"/>
</dbReference>
<dbReference type="GO" id="GO:0005886">
    <property type="term" value="C:plasma membrane"/>
    <property type="evidence" value="ECO:0007669"/>
    <property type="project" value="UniProtKB-SubCell"/>
</dbReference>
<dbReference type="HAMAP" id="MF_01562">
    <property type="entry name" value="FloA"/>
    <property type="match status" value="1"/>
</dbReference>
<dbReference type="InterPro" id="IPR022853">
    <property type="entry name" value="FloA"/>
</dbReference>
<dbReference type="NCBIfam" id="NF010186">
    <property type="entry name" value="PRK13665.1"/>
    <property type="match status" value="1"/>
</dbReference>
<dbReference type="Pfam" id="PF12127">
    <property type="entry name" value="FloA"/>
    <property type="match status" value="1"/>
</dbReference>
<gene>
    <name evidence="1" type="primary">floA</name>
    <name type="ordered locus">SACOL1630</name>
</gene>
<keyword id="KW-1003">Cell membrane</keyword>
<keyword id="KW-0472">Membrane</keyword>
<keyword id="KW-0812">Transmembrane</keyword>
<keyword id="KW-1133">Transmembrane helix</keyword>
<accession>Q5HFI7</accession>
<proteinExistence type="inferred from homology"/>
<feature type="chain" id="PRO_0000232560" description="Flotillin-like protein FloA">
    <location>
        <begin position="1"/>
        <end position="329"/>
    </location>
</feature>
<feature type="transmembrane region" description="Helical" evidence="1">
    <location>
        <begin position="6"/>
        <end position="26"/>
    </location>
</feature>
<feature type="transmembrane region" description="Helical" evidence="1">
    <location>
        <begin position="27"/>
        <end position="47"/>
    </location>
</feature>
<reference key="1">
    <citation type="journal article" date="2005" name="J. Bacteriol.">
        <title>Insights on evolution of virulence and resistance from the complete genome analysis of an early methicillin-resistant Staphylococcus aureus strain and a biofilm-producing methicillin-resistant Staphylococcus epidermidis strain.</title>
        <authorList>
            <person name="Gill S.R."/>
            <person name="Fouts D.E."/>
            <person name="Archer G.L."/>
            <person name="Mongodin E.F."/>
            <person name="DeBoy R.T."/>
            <person name="Ravel J."/>
            <person name="Paulsen I.T."/>
            <person name="Kolonay J.F."/>
            <person name="Brinkac L.M."/>
            <person name="Beanan M.J."/>
            <person name="Dodson R.J."/>
            <person name="Daugherty S.C."/>
            <person name="Madupu R."/>
            <person name="Angiuoli S.V."/>
            <person name="Durkin A.S."/>
            <person name="Haft D.H."/>
            <person name="Vamathevan J.J."/>
            <person name="Khouri H."/>
            <person name="Utterback T.R."/>
            <person name="Lee C."/>
            <person name="Dimitrov G."/>
            <person name="Jiang L."/>
            <person name="Qin H."/>
            <person name="Weidman J."/>
            <person name="Tran K."/>
            <person name="Kang K.H."/>
            <person name="Hance I.R."/>
            <person name="Nelson K.E."/>
            <person name="Fraser C.M."/>
        </authorList>
    </citation>
    <scope>NUCLEOTIDE SEQUENCE [LARGE SCALE GENOMIC DNA]</scope>
    <source>
        <strain>COL</strain>
    </source>
</reference>
<organism>
    <name type="scientific">Staphylococcus aureus (strain COL)</name>
    <dbReference type="NCBI Taxonomy" id="93062"/>
    <lineage>
        <taxon>Bacteria</taxon>
        <taxon>Bacillati</taxon>
        <taxon>Bacillota</taxon>
        <taxon>Bacilli</taxon>
        <taxon>Bacillales</taxon>
        <taxon>Staphylococcaceae</taxon>
        <taxon>Staphylococcus</taxon>
    </lineage>
</organism>
<sequence length="329" mass="35181">MFSLSFIVIAVIIVVALLILFSFVPIGLWISALAAGVHVGIGTLVGMRLRRVSPRKVIAPLIKAHKAGLALTTNQLESHYLAGGNVDRVVDANIAAQRADIDLPFERAAAIDLAGRDVLEAVQMSVNPKVIETPFIAGVAMNGIEVKAKARITVRANIARLVGGAGEETIIARVGEGIVSTIGSSKHHTEVLENPDNISKTVLSKGLDSGTAFEILSIDIADVDISKNIGADLQTEQALADKNIAQAKAEERRAMAVATEQEMKARVQEMHAKVVEAESEVPLAMAEALRSGNISVKDYYNLKNIEADTGMRNAINKRTDQSDDESPEH</sequence>
<protein>
    <recommendedName>
        <fullName evidence="1">Flotillin-like protein FloA</fullName>
    </recommendedName>
</protein>
<evidence type="ECO:0000255" key="1">
    <source>
        <dbReference type="HAMAP-Rule" id="MF_01562"/>
    </source>
</evidence>